<organism>
    <name type="scientific">Sicarius cf. damarensis (strain GJB-2008)</name>
    <name type="common">Six-eyed sand spider</name>
    <dbReference type="NCBI Taxonomy" id="575956"/>
    <lineage>
        <taxon>Eukaryota</taxon>
        <taxon>Metazoa</taxon>
        <taxon>Ecdysozoa</taxon>
        <taxon>Arthropoda</taxon>
        <taxon>Chelicerata</taxon>
        <taxon>Arachnida</taxon>
        <taxon>Araneae</taxon>
        <taxon>Araneomorphae</taxon>
        <taxon>Haplogynae</taxon>
        <taxon>Scytodoidea</taxon>
        <taxon>Sicariidae</taxon>
        <taxon>Sicarius</taxon>
    </lineage>
</organism>
<evidence type="ECO:0000250" key="1">
    <source>
        <dbReference type="UniProtKB" id="A0A0D4WTV1"/>
    </source>
</evidence>
<evidence type="ECO:0000250" key="2">
    <source>
        <dbReference type="UniProtKB" id="A0A0D4WV12"/>
    </source>
</evidence>
<evidence type="ECO:0000250" key="3">
    <source>
        <dbReference type="UniProtKB" id="P0CE80"/>
    </source>
</evidence>
<evidence type="ECO:0000250" key="4">
    <source>
        <dbReference type="UniProtKB" id="Q4ZFU2"/>
    </source>
</evidence>
<evidence type="ECO:0000250" key="5">
    <source>
        <dbReference type="UniProtKB" id="Q8I914"/>
    </source>
</evidence>
<evidence type="ECO:0000303" key="6">
    <source>
    </source>
</evidence>
<evidence type="ECO:0000305" key="7"/>
<evidence type="ECO:0000305" key="8">
    <source>
    </source>
</evidence>
<name>B2KB9_SICCD</name>
<accession>C0JB83</accession>
<comment type="function">
    <text evidence="1 3">Dermonecrotic toxins cleave the phosphodiester linkage between the phosphate and headgroup of certain phospholipids (sphingolipid and lysolipid substrates), forming an alcohol (often choline) and a cyclic phosphate (By similarity). This toxin acts on sphingomyelin (SM) (By similarity). It may also act on ceramide phosphoethanolamine (CPE), lysophosphatidylcholine (LPC) and lysophosphatidylethanolamine (LPE), but not on lysophosphatidylserine (LPS), and lysophosphatidylglycerol (LPG) (By similarity). It acts by transphosphatidylation, releasing exclusively cyclic phosphate products as second products (By similarity). Induces dermonecrosis, hemolysis, increased vascular permeability, edema, inflammatory response, and platelet aggregation (By similarity).</text>
</comment>
<comment type="catalytic activity">
    <reaction evidence="1">
        <text>an N-(acyl)-sphingosylphosphocholine = an N-(acyl)-sphingosyl-1,3-cyclic phosphate + choline</text>
        <dbReference type="Rhea" id="RHEA:60652"/>
        <dbReference type="ChEBI" id="CHEBI:15354"/>
        <dbReference type="ChEBI" id="CHEBI:64583"/>
        <dbReference type="ChEBI" id="CHEBI:143892"/>
    </reaction>
</comment>
<comment type="catalytic activity">
    <reaction evidence="1">
        <text>an N-(acyl)-sphingosylphosphoethanolamine = an N-(acyl)-sphingosyl-1,3-cyclic phosphate + ethanolamine</text>
        <dbReference type="Rhea" id="RHEA:60648"/>
        <dbReference type="ChEBI" id="CHEBI:57603"/>
        <dbReference type="ChEBI" id="CHEBI:143891"/>
        <dbReference type="ChEBI" id="CHEBI:143892"/>
    </reaction>
</comment>
<comment type="catalytic activity">
    <reaction evidence="1">
        <text>a 1-acyl-sn-glycero-3-phosphocholine = a 1-acyl-sn-glycero-2,3-cyclic phosphate + choline</text>
        <dbReference type="Rhea" id="RHEA:60700"/>
        <dbReference type="ChEBI" id="CHEBI:15354"/>
        <dbReference type="ChEBI" id="CHEBI:58168"/>
        <dbReference type="ChEBI" id="CHEBI:143947"/>
    </reaction>
</comment>
<comment type="catalytic activity">
    <reaction evidence="1">
        <text>a 1-acyl-sn-glycero-3-phosphoethanolamine = a 1-acyl-sn-glycero-2,3-cyclic phosphate + ethanolamine</text>
        <dbReference type="Rhea" id="RHEA:60704"/>
        <dbReference type="ChEBI" id="CHEBI:57603"/>
        <dbReference type="ChEBI" id="CHEBI:64381"/>
        <dbReference type="ChEBI" id="CHEBI:143947"/>
    </reaction>
</comment>
<comment type="cofactor">
    <cofactor evidence="5">
        <name>Mg(2+)</name>
        <dbReference type="ChEBI" id="CHEBI:18420"/>
    </cofactor>
    <text evidence="5">Binds 1 Mg(2+) ion per subunit.</text>
</comment>
<comment type="subcellular location">
    <subcellularLocation>
        <location evidence="8">Secreted</location>
    </subcellularLocation>
</comment>
<comment type="tissue specificity">
    <text evidence="8">Expressed by the venom gland.</text>
</comment>
<comment type="similarity">
    <text evidence="7">Belongs to the arthropod phospholipase D family. Class II subfamily.</text>
</comment>
<comment type="caution">
    <text evidence="1 2 4">The most common activity assay for dermonecrotic toxins detects enzymatic activity by monitoring choline release from substrate. Liberation of choline from sphingomyelin (SM) or lysophosphatidylcholine (LPC) is commonly assumed to result from substrate hydrolysis, giving either ceramide-1-phosphate (C1P) or lysophosphatidic acid (LPA), respectively, as a second product. However, two studies from Lajoie and colleagues (2013 and 2015) report the observation of exclusive formation of cyclic phosphate products as second products, resulting from intramolecular transphosphatidylation. Cyclic phosphates have vastly different biological properties from their monoester counterparts, and they may be relevant to the pathology of brown spider envenomation.</text>
</comment>
<protein>
    <recommendedName>
        <fullName evidence="6">Dermonecrotic toxin SdSicTox-betaIIB1bix</fullName>
        <ecNumber evidence="4">4.6.1.-</ecNumber>
    </recommendedName>
    <alternativeName>
        <fullName>Phospholipase D</fullName>
        <shortName>PLD</shortName>
    </alternativeName>
    <alternativeName>
        <fullName>Sphingomyelin phosphodiesterase D</fullName>
        <shortName>SMD</shortName>
        <shortName>SMase D</shortName>
        <shortName>Sphingomyelinase D</shortName>
    </alternativeName>
</protein>
<dbReference type="EC" id="4.6.1.-" evidence="4"/>
<dbReference type="EMBL" id="FJ171518">
    <property type="protein sequence ID" value="ACN49014.1"/>
    <property type="molecule type" value="mRNA"/>
</dbReference>
<dbReference type="SMR" id="C0JB83"/>
<dbReference type="GO" id="GO:0005576">
    <property type="term" value="C:extracellular region"/>
    <property type="evidence" value="ECO:0007669"/>
    <property type="project" value="UniProtKB-SubCell"/>
</dbReference>
<dbReference type="GO" id="GO:0016829">
    <property type="term" value="F:lyase activity"/>
    <property type="evidence" value="ECO:0007669"/>
    <property type="project" value="UniProtKB-KW"/>
</dbReference>
<dbReference type="GO" id="GO:0046872">
    <property type="term" value="F:metal ion binding"/>
    <property type="evidence" value="ECO:0007669"/>
    <property type="project" value="UniProtKB-KW"/>
</dbReference>
<dbReference type="GO" id="GO:0008081">
    <property type="term" value="F:phosphoric diester hydrolase activity"/>
    <property type="evidence" value="ECO:0007669"/>
    <property type="project" value="InterPro"/>
</dbReference>
<dbReference type="GO" id="GO:0090729">
    <property type="term" value="F:toxin activity"/>
    <property type="evidence" value="ECO:0007669"/>
    <property type="project" value="UniProtKB-KW"/>
</dbReference>
<dbReference type="GO" id="GO:0031640">
    <property type="term" value="P:killing of cells of another organism"/>
    <property type="evidence" value="ECO:0007669"/>
    <property type="project" value="UniProtKB-KW"/>
</dbReference>
<dbReference type="GO" id="GO:0016042">
    <property type="term" value="P:lipid catabolic process"/>
    <property type="evidence" value="ECO:0007669"/>
    <property type="project" value="UniProtKB-KW"/>
</dbReference>
<dbReference type="CDD" id="cd08576">
    <property type="entry name" value="GDPD_like_SMaseD_PLD"/>
    <property type="match status" value="1"/>
</dbReference>
<dbReference type="Gene3D" id="3.20.20.190">
    <property type="entry name" value="Phosphatidylinositol (PI) phosphodiesterase"/>
    <property type="match status" value="1"/>
</dbReference>
<dbReference type="InterPro" id="IPR017946">
    <property type="entry name" value="PLC-like_Pdiesterase_TIM-brl"/>
</dbReference>
<dbReference type="SUPFAM" id="SSF51695">
    <property type="entry name" value="PLC-like phosphodiesterases"/>
    <property type="match status" value="1"/>
</dbReference>
<keyword id="KW-0204">Cytolysis</keyword>
<keyword id="KW-1061">Dermonecrotic toxin</keyword>
<keyword id="KW-1015">Disulfide bond</keyword>
<keyword id="KW-0354">Hemolysis</keyword>
<keyword id="KW-0442">Lipid degradation</keyword>
<keyword id="KW-0443">Lipid metabolism</keyword>
<keyword id="KW-0456">Lyase</keyword>
<keyword id="KW-0460">Magnesium</keyword>
<keyword id="KW-0479">Metal-binding</keyword>
<keyword id="KW-0964">Secreted</keyword>
<keyword id="KW-0800">Toxin</keyword>
<sequence>WIMGHMVNAIEQVDKFLNLGANAIEFDIDFDKDGIAQITHHGIPCDCGRKCTKKAIFTEYLDNIRQVTTPDDPKFREQLVLLALDLKLQRISSAKAYRAGEDVAKKLPDHYWQRGNSRARAYILLNIPLVEDYEFIRAFKDTLKNEGYESYNDKVGINFTGNEDLDKIRDVLEILGIHKQVWQADGITSCFARGTERLKEALEKRDTPGYNYINKVYAWTLVRKSIMRRSLRLGVDGVMSNNPDRVIKVLKEKEFADKFRLATYNDNPWEKFRG</sequence>
<proteinExistence type="evidence at transcript level"/>
<reference key="1">
    <citation type="journal article" date="2009" name="Mol. Biol. Evol.">
        <title>Molecular evolution, functional variation, and proposed nomenclature of the gene family that includes sphingomyelinase D in sicariid spider venoms.</title>
        <authorList>
            <person name="Binford G.J."/>
            <person name="Bodner M.R."/>
            <person name="Cordes M.H."/>
            <person name="Baldwin K.L."/>
            <person name="Rynerson M.R."/>
            <person name="Burns S.N."/>
            <person name="Zobel-Thropp P.A."/>
        </authorList>
    </citation>
    <scope>NUCLEOTIDE SEQUENCE [MRNA]</scope>
    <scope>NOMENCLATURE</scope>
    <source>
        <tissue>Venom gland</tissue>
    </source>
</reference>
<feature type="chain" id="PRO_0000392894" description="Dermonecrotic toxin SdSicTox-betaIIB1bix">
    <location>
        <begin position="1" status="less than"/>
        <end position="274"/>
    </location>
</feature>
<feature type="active site" evidence="5">
    <location>
        <position position="5"/>
    </location>
</feature>
<feature type="active site" description="Nucleophile" evidence="5">
    <location>
        <position position="41"/>
    </location>
</feature>
<feature type="binding site" evidence="5">
    <location>
        <position position="25"/>
    </location>
    <ligand>
        <name>Mg(2+)</name>
        <dbReference type="ChEBI" id="CHEBI:18420"/>
    </ligand>
</feature>
<feature type="binding site" evidence="5">
    <location>
        <position position="27"/>
    </location>
    <ligand>
        <name>Mg(2+)</name>
        <dbReference type="ChEBI" id="CHEBI:18420"/>
    </ligand>
</feature>
<feature type="binding site" evidence="5">
    <location>
        <position position="85"/>
    </location>
    <ligand>
        <name>Mg(2+)</name>
        <dbReference type="ChEBI" id="CHEBI:18420"/>
    </ligand>
</feature>
<feature type="disulfide bond" evidence="3">
    <location>
        <begin position="45"/>
        <end position="51"/>
    </location>
</feature>
<feature type="disulfide bond" evidence="3">
    <location>
        <begin position="47"/>
        <end position="190"/>
    </location>
</feature>
<feature type="non-terminal residue">
    <location>
        <position position="1"/>
    </location>
</feature>